<name>SOCS7_MOUSE</name>
<accession>Q8VHQ2</accession>
<accession>B1AQY1</accession>
<accession>Q3UH08</accession>
<sequence length="579" mass="62784">MVFRNVGRPPEEEDAEAAREPGPSELLCPRHRCALDPKALPPGLALERTWGPVAGLEAQLAALGLGQPAGPGIKTAGGGCCPCPCPPQPPPPQPPPPAAAPQAGEDPTETSDALLVLEGLESEAESLETNSCSEEELSSPGRGGGGVGGRLLLQPPGPELPPVPFPLQDLVPPGRLSRGEQQQQQPPPPPPPPGPLRPLAGPSRKGSFKIRLSRLFRTKSCNGGSGGGDGTGKRPSGDLAASAASLTDMGGSAVRELDTGRKPRLTRTQSAFSPVSFSPLFTGETVSLVDVDISQRGLTSPHPPTPPPPPRRSLSLLDDISGTLPTSVLVAPMGSSLQSFPLPPPPPPHAPDAFPRIAPIRASESLHSQPPQHLQCPLYRPDSSSFAASLRELEKCGWYWGPMNWEDAEMKLKGKPDGSFLVRDSSDPRYILSLSFRSQGITHHTRMEHYRGTFSLWCHPKFEDRCQSVVEFIKRAIMHSKNGKFLYFLRSRVPGLPPTPVQLLYPVSRFSNVKSLQHLCRFRIRQLVRIDHIPDLPLPKPLISYIRKFYYYDPQEEVYLSLKEAQLISKQKQEVEPST</sequence>
<keyword id="KW-1003">Cell membrane</keyword>
<keyword id="KW-0963">Cytoplasm</keyword>
<keyword id="KW-0341">Growth regulation</keyword>
<keyword id="KW-0472">Membrane</keyword>
<keyword id="KW-0539">Nucleus</keyword>
<keyword id="KW-1185">Reference proteome</keyword>
<keyword id="KW-0727">SH2 domain</keyword>
<keyword id="KW-0734">Signal transduction inhibitor</keyword>
<keyword id="KW-0833">Ubl conjugation pathway</keyword>
<gene>
    <name evidence="11 13" type="primary">Socs7</name>
    <name type="synonym">Cish7</name>
    <name type="synonym">Nap4</name>
</gene>
<proteinExistence type="evidence at protein level"/>
<feature type="chain" id="PRO_0000181254" description="Suppressor of cytokine signaling 7">
    <location>
        <begin position="1"/>
        <end position="579"/>
    </location>
</feature>
<feature type="domain" description="SH2" evidence="2">
    <location>
        <begin position="398"/>
        <end position="507"/>
    </location>
</feature>
<feature type="domain" description="SOCS box" evidence="3">
    <location>
        <begin position="502"/>
        <end position="552"/>
    </location>
</feature>
<feature type="region of interest" description="Disordered" evidence="4">
    <location>
        <begin position="1"/>
        <end position="25"/>
    </location>
</feature>
<feature type="region of interest" description="Disordered" evidence="4">
    <location>
        <begin position="89"/>
        <end position="270"/>
    </location>
</feature>
<feature type="region of interest" description="Mediates interaction with SORBS3" evidence="1">
    <location>
        <begin position="124"/>
        <end position="492"/>
    </location>
</feature>
<feature type="region of interest" description="Disordered" evidence="4">
    <location>
        <begin position="295"/>
        <end position="315"/>
    </location>
</feature>
<feature type="compositionally biased region" description="Pro residues" evidence="4">
    <location>
        <begin position="89"/>
        <end position="99"/>
    </location>
</feature>
<feature type="compositionally biased region" description="Pro residues" evidence="4">
    <location>
        <begin position="155"/>
        <end position="165"/>
    </location>
</feature>
<feature type="compositionally biased region" description="Pro residues" evidence="4">
    <location>
        <begin position="185"/>
        <end position="196"/>
    </location>
</feature>
<feature type="compositionally biased region" description="Basic residues" evidence="4">
    <location>
        <begin position="206"/>
        <end position="217"/>
    </location>
</feature>
<feature type="compositionally biased region" description="Pro residues" evidence="4">
    <location>
        <begin position="301"/>
        <end position="311"/>
    </location>
</feature>
<feature type="mutagenesis site" description="Abolished formation of the ECS(SOCS7) complex." evidence="9">
    <original>LC</original>
    <variation>QQ</variation>
    <location>
        <begin position="519"/>
        <end position="520"/>
    </location>
</feature>
<protein>
    <recommendedName>
        <fullName evidence="12">Suppressor of cytokine signaling 7</fullName>
        <shortName evidence="10">SOCS-7</shortName>
    </recommendedName>
</protein>
<reference key="1">
    <citation type="submission" date="2001-09" db="EMBL/GenBank/DDBJ databases">
        <authorList>
            <person name="Hilton D.J."/>
            <person name="Viney E.M."/>
            <person name="Alexander W.S."/>
            <person name="Willson T.A."/>
            <person name="Nicola N.A."/>
        </authorList>
    </citation>
    <scope>NUCLEOTIDE SEQUENCE [MRNA]</scope>
    <source>
        <strain>C57BL/6J</strain>
    </source>
</reference>
<reference key="2">
    <citation type="journal article" date="2005" name="Science">
        <title>The transcriptional landscape of the mammalian genome.</title>
        <authorList>
            <person name="Carninci P."/>
            <person name="Kasukawa T."/>
            <person name="Katayama S."/>
            <person name="Gough J."/>
            <person name="Frith M.C."/>
            <person name="Maeda N."/>
            <person name="Oyama R."/>
            <person name="Ravasi T."/>
            <person name="Lenhard B."/>
            <person name="Wells C."/>
            <person name="Kodzius R."/>
            <person name="Shimokawa K."/>
            <person name="Bajic V.B."/>
            <person name="Brenner S.E."/>
            <person name="Batalov S."/>
            <person name="Forrest A.R."/>
            <person name="Zavolan M."/>
            <person name="Davis M.J."/>
            <person name="Wilming L.G."/>
            <person name="Aidinis V."/>
            <person name="Allen J.E."/>
            <person name="Ambesi-Impiombato A."/>
            <person name="Apweiler R."/>
            <person name="Aturaliya R.N."/>
            <person name="Bailey T.L."/>
            <person name="Bansal M."/>
            <person name="Baxter L."/>
            <person name="Beisel K.W."/>
            <person name="Bersano T."/>
            <person name="Bono H."/>
            <person name="Chalk A.M."/>
            <person name="Chiu K.P."/>
            <person name="Choudhary V."/>
            <person name="Christoffels A."/>
            <person name="Clutterbuck D.R."/>
            <person name="Crowe M.L."/>
            <person name="Dalla E."/>
            <person name="Dalrymple B.P."/>
            <person name="de Bono B."/>
            <person name="Della Gatta G."/>
            <person name="di Bernardo D."/>
            <person name="Down T."/>
            <person name="Engstrom P."/>
            <person name="Fagiolini M."/>
            <person name="Faulkner G."/>
            <person name="Fletcher C.F."/>
            <person name="Fukushima T."/>
            <person name="Furuno M."/>
            <person name="Futaki S."/>
            <person name="Gariboldi M."/>
            <person name="Georgii-Hemming P."/>
            <person name="Gingeras T.R."/>
            <person name="Gojobori T."/>
            <person name="Green R.E."/>
            <person name="Gustincich S."/>
            <person name="Harbers M."/>
            <person name="Hayashi Y."/>
            <person name="Hensch T.K."/>
            <person name="Hirokawa N."/>
            <person name="Hill D."/>
            <person name="Huminiecki L."/>
            <person name="Iacono M."/>
            <person name="Ikeo K."/>
            <person name="Iwama A."/>
            <person name="Ishikawa T."/>
            <person name="Jakt M."/>
            <person name="Kanapin A."/>
            <person name="Katoh M."/>
            <person name="Kawasawa Y."/>
            <person name="Kelso J."/>
            <person name="Kitamura H."/>
            <person name="Kitano H."/>
            <person name="Kollias G."/>
            <person name="Krishnan S.P."/>
            <person name="Kruger A."/>
            <person name="Kummerfeld S.K."/>
            <person name="Kurochkin I.V."/>
            <person name="Lareau L.F."/>
            <person name="Lazarevic D."/>
            <person name="Lipovich L."/>
            <person name="Liu J."/>
            <person name="Liuni S."/>
            <person name="McWilliam S."/>
            <person name="Madan Babu M."/>
            <person name="Madera M."/>
            <person name="Marchionni L."/>
            <person name="Matsuda H."/>
            <person name="Matsuzawa S."/>
            <person name="Miki H."/>
            <person name="Mignone F."/>
            <person name="Miyake S."/>
            <person name="Morris K."/>
            <person name="Mottagui-Tabar S."/>
            <person name="Mulder N."/>
            <person name="Nakano N."/>
            <person name="Nakauchi H."/>
            <person name="Ng P."/>
            <person name="Nilsson R."/>
            <person name="Nishiguchi S."/>
            <person name="Nishikawa S."/>
            <person name="Nori F."/>
            <person name="Ohara O."/>
            <person name="Okazaki Y."/>
            <person name="Orlando V."/>
            <person name="Pang K.C."/>
            <person name="Pavan W.J."/>
            <person name="Pavesi G."/>
            <person name="Pesole G."/>
            <person name="Petrovsky N."/>
            <person name="Piazza S."/>
            <person name="Reed J."/>
            <person name="Reid J.F."/>
            <person name="Ring B.Z."/>
            <person name="Ringwald M."/>
            <person name="Rost B."/>
            <person name="Ruan Y."/>
            <person name="Salzberg S.L."/>
            <person name="Sandelin A."/>
            <person name="Schneider C."/>
            <person name="Schoenbach C."/>
            <person name="Sekiguchi K."/>
            <person name="Semple C.A."/>
            <person name="Seno S."/>
            <person name="Sessa L."/>
            <person name="Sheng Y."/>
            <person name="Shibata Y."/>
            <person name="Shimada H."/>
            <person name="Shimada K."/>
            <person name="Silva D."/>
            <person name="Sinclair B."/>
            <person name="Sperling S."/>
            <person name="Stupka E."/>
            <person name="Sugiura K."/>
            <person name="Sultana R."/>
            <person name="Takenaka Y."/>
            <person name="Taki K."/>
            <person name="Tammoja K."/>
            <person name="Tan S.L."/>
            <person name="Tang S."/>
            <person name="Taylor M.S."/>
            <person name="Tegner J."/>
            <person name="Teichmann S.A."/>
            <person name="Ueda H.R."/>
            <person name="van Nimwegen E."/>
            <person name="Verardo R."/>
            <person name="Wei C.L."/>
            <person name="Yagi K."/>
            <person name="Yamanishi H."/>
            <person name="Zabarovsky E."/>
            <person name="Zhu S."/>
            <person name="Zimmer A."/>
            <person name="Hide W."/>
            <person name="Bult C."/>
            <person name="Grimmond S.M."/>
            <person name="Teasdale R.D."/>
            <person name="Liu E.T."/>
            <person name="Brusic V."/>
            <person name="Quackenbush J."/>
            <person name="Wahlestedt C."/>
            <person name="Mattick J.S."/>
            <person name="Hume D.A."/>
            <person name="Kai C."/>
            <person name="Sasaki D."/>
            <person name="Tomaru Y."/>
            <person name="Fukuda S."/>
            <person name="Kanamori-Katayama M."/>
            <person name="Suzuki M."/>
            <person name="Aoki J."/>
            <person name="Arakawa T."/>
            <person name="Iida J."/>
            <person name="Imamura K."/>
            <person name="Itoh M."/>
            <person name="Kato T."/>
            <person name="Kawaji H."/>
            <person name="Kawagashira N."/>
            <person name="Kawashima T."/>
            <person name="Kojima M."/>
            <person name="Kondo S."/>
            <person name="Konno H."/>
            <person name="Nakano K."/>
            <person name="Ninomiya N."/>
            <person name="Nishio T."/>
            <person name="Okada M."/>
            <person name="Plessy C."/>
            <person name="Shibata K."/>
            <person name="Shiraki T."/>
            <person name="Suzuki S."/>
            <person name="Tagami M."/>
            <person name="Waki K."/>
            <person name="Watahiki A."/>
            <person name="Okamura-Oho Y."/>
            <person name="Suzuki H."/>
            <person name="Kawai J."/>
            <person name="Hayashizaki Y."/>
        </authorList>
    </citation>
    <scope>NUCLEOTIDE SEQUENCE [LARGE SCALE MRNA]</scope>
    <source>
        <strain>C57BL/6J</strain>
        <tissue>Brain</tissue>
    </source>
</reference>
<reference key="3">
    <citation type="journal article" date="2009" name="PLoS Biol.">
        <title>Lineage-specific biology revealed by a finished genome assembly of the mouse.</title>
        <authorList>
            <person name="Church D.M."/>
            <person name="Goodstadt L."/>
            <person name="Hillier L.W."/>
            <person name="Zody M.C."/>
            <person name="Goldstein S."/>
            <person name="She X."/>
            <person name="Bult C.J."/>
            <person name="Agarwala R."/>
            <person name="Cherry J.L."/>
            <person name="DiCuccio M."/>
            <person name="Hlavina W."/>
            <person name="Kapustin Y."/>
            <person name="Meric P."/>
            <person name="Maglott D."/>
            <person name="Birtle Z."/>
            <person name="Marques A.C."/>
            <person name="Graves T."/>
            <person name="Zhou S."/>
            <person name="Teague B."/>
            <person name="Potamousis K."/>
            <person name="Churas C."/>
            <person name="Place M."/>
            <person name="Herschleb J."/>
            <person name="Runnheim R."/>
            <person name="Forrest D."/>
            <person name="Amos-Landgraf J."/>
            <person name="Schwartz D.C."/>
            <person name="Cheng Z."/>
            <person name="Lindblad-Toh K."/>
            <person name="Eichler E.E."/>
            <person name="Ponting C.P."/>
        </authorList>
    </citation>
    <scope>NUCLEOTIDE SEQUENCE [LARGE SCALE GENOMIC DNA]</scope>
    <source>
        <strain>C57BL/6J</strain>
    </source>
</reference>
<reference key="4">
    <citation type="journal article" date="2002" name="Mol. Cell. Biol.">
        <title>SOCS-6 binds to insulin receptor substrate 4, and mice lacking the SOCS-6 gene exhibit mild growth retardation.</title>
        <authorList>
            <person name="Krebs D.L."/>
            <person name="Uren R.T."/>
            <person name="Metcalf D."/>
            <person name="Rakar S."/>
            <person name="Zhang J.-G."/>
            <person name="Starr R."/>
            <person name="De Souza D.P."/>
            <person name="Hanzinikolas K."/>
            <person name="Eyles J."/>
            <person name="Connolly L.M."/>
            <person name="Simpson R.J."/>
            <person name="Nicola N.A."/>
            <person name="Nicholson S.E."/>
            <person name="Baca M."/>
            <person name="Hilton D.J."/>
            <person name="Alexander W.S."/>
        </authorList>
    </citation>
    <scope>INTERACTION WITH IRS4 AND PIK3R1</scope>
    <scope>TISSUE SPECIFICITY</scope>
</reference>
<reference key="5">
    <citation type="journal article" date="2004" name="Exp. Cell Res.">
        <title>The suppressor of cytokine signaling (SOCS)-7 interacts with the actin cytoskeleton through vinexin.</title>
        <authorList>
            <person name="Martens N."/>
            <person name="Wery M."/>
            <person name="Wang P."/>
            <person name="Braet F."/>
            <person name="Gertler A."/>
            <person name="Hooghe R."/>
            <person name="Vandenhaute J."/>
            <person name="Hooghe-Peters E.L."/>
        </authorList>
    </citation>
    <scope>SUBCELLULAR LOCATION</scope>
</reference>
<reference key="6">
    <citation type="journal article" date="2004" name="Proc. Natl. Acad. Sci. U.S.A.">
        <title>Development of hydrocephalus in mice lacking SOCS7.</title>
        <authorList>
            <person name="Krebs D.L."/>
            <person name="Metcalf D."/>
            <person name="Merson T.D."/>
            <person name="Voss A.K."/>
            <person name="Thomas T."/>
            <person name="Zhang J.-G."/>
            <person name="Rakar S."/>
            <person name="O'bryan M.K."/>
            <person name="Willson T.A."/>
            <person name="Viney E.M."/>
            <person name="Mielke L.A."/>
            <person name="Nicola N.A."/>
            <person name="Hilton D.J."/>
            <person name="Alexander W.S."/>
        </authorList>
    </citation>
    <scope>TISSUE SPECIFICITY</scope>
    <scope>DEVELOPMENTAL STAGE</scope>
    <scope>DISRUPTION PHENOTYPE</scope>
</reference>
<reference key="7">
    <citation type="journal article" date="2005" name="J. Clin. Invest.">
        <title>Deletion of SOCS7 leads to enhanced insulin action and enlarged islets of Langerhans.</title>
        <authorList>
            <person name="Banks A.S."/>
            <person name="Li J."/>
            <person name="McKeag L."/>
            <person name="Hribal M.L."/>
            <person name="Kashiwada M."/>
            <person name="Accili D."/>
            <person name="Rothman P.B."/>
        </authorList>
    </citation>
    <scope>FUNCTION</scope>
    <scope>TISSUE SPECIFICITY</scope>
</reference>
<reference key="8">
    <citation type="journal article" date="2013" name="Dev. Cell">
        <title>Rbx2 regulates neuronal migration through different cullin 5-RING ligase adaptors.</title>
        <authorList>
            <person name="Simo S."/>
            <person name="Cooper J.A."/>
        </authorList>
    </citation>
    <scope>FUNCTION</scope>
    <scope>PATHWAY</scope>
    <scope>IDENTIFICATION IN THE ECS(SOCS7) COMPLEX</scope>
    <scope>DOMAIN</scope>
    <scope>DEVELOPMENTAL STAGE</scope>
    <scope>DISRUPTION PHENOTYPE</scope>
    <scope>MUTAGENESIS OF 519-LEU-CYS-520</scope>
</reference>
<comment type="function">
    <text evidence="1 8 9">Substrate-recognition component of a cullin-5-RING E3 ubiquitin-protein ligase complex (ECS complex, also named CRL5 complex), which mediates the ubiquitination and subsequent proteasomal degradation of target proteins, such as DAB1 and IRS1 (PubMed:16127460, PubMed:24210661). Specifically recognizes and binds phosphorylated proteins via its SH2 domain, promoting their ubiquitination (PubMed:24210661). The ECS(SOCS7) complex acts as a key regulator of reelin signaling by mediating ubiquitination and degradation of phosphorylated DAB1 in the cortical plate of the developing cerebral cortex, thereby regulating neuron positioning during cortex development (PubMed:24210661). Functions in insulin signaling and glucose homeostasis through IRS1 ubiquitination and subsequent proteasomal degradation (PubMed:16127460). Also inhibits prolactin, growth hormone and leptin signaling by preventing STAT3 and STAT5 activation, sequestering them in the cytoplasm and reducing their binding to DNA (By similarity).</text>
</comment>
<comment type="pathway">
    <text evidence="9">Protein modification; protein ubiquitination.</text>
</comment>
<comment type="subunit">
    <text evidence="1 5 9">Substrate-recognition component of the ECS(SOCS7) complex, composed of SOCS7, CUL5, ELOB, ELOC and RNF7/RBX2 (PubMed:24210661). Interacts, via the third proline-rich region, with the second SH3 domain of the adapter protein NCK1 (By similarity). Also interacts with GRB2, INSR, PLCG1, SORBS3/vinexin, and phosphorylated STAT3 and STAT5 (By similarity). Interacts with SEPT6 (By similarity). Interacts with phosphorylated IRS4 and PIK3R1 (PubMed:12052866).</text>
</comment>
<comment type="subcellular location">
    <subcellularLocation>
        <location evidence="6">Cytoplasm</location>
    </subcellularLocation>
    <subcellularLocation>
        <location evidence="6">Nucleus</location>
    </subcellularLocation>
    <subcellularLocation>
        <location evidence="6">Cell membrane</location>
        <topology evidence="6">Peripheral membrane protein</topology>
        <orientation evidence="6">Cytoplasmic side</orientation>
    </subcellularLocation>
    <text evidence="1">Mostly cytoplasmic, but shuttles between the cytoplasm and the nucleus. Rapidly relocalizes to the nucleus after UV irradiation. Cytoplasmic location depends upon SEPT7 presence.</text>
</comment>
<comment type="tissue specificity">
    <text evidence="5 7 8">Widely expressed with higher expression in brain and testis where it is expressed by spermatocytes and early spermatids (PubMed:12052866, PubMed:15494444, PubMed:16127460). Also significantly expressed in spleen, skeletal muscle and kidney (PubMed:12052866, PubMed:15494444, PubMed:16127460).</text>
</comment>
<comment type="developmental stage">
    <text evidence="7 9">Ubiquitously expressed at low level in 12.5 dpc and 15.5 dpc embryos (PubMed:15494444). More significantly expressed in the nervous system at 12.5 dpc and the cortical plate at 15.5 dpc (PubMed:15494444). Expressed in the brain postnatally in particular in the hippocampal formation and the medial habenular nuclei at P7 (PubMed:15494444). Low-level expression in other brain areas was present at P7 and was reduced to very low levels at P14 and P21 (PubMed:15494444). The hippocampal granule cell layer and the cerebellar granular layer maintained moderate expression levels at P7, P14, and P21 (PubMed:15494444). Expression is tightly controlled during neuronal migration: expressed at much lower levels in progenitors and early migrating neurons compared to mature neurons that have ceased migration (PubMed:24210661). Socs7 synthesis increases during developmental time and increases within individual neurons when they near the top of the cortical plate (PubMed:24210661).</text>
</comment>
<comment type="domain">
    <text evidence="9">The SOCS box domain mediates the interaction with the Elongin BC complex, an adapter module in different E3 ubiquitin ligase complexes.</text>
</comment>
<comment type="disruption phenotype">
    <text evidence="7 9">Mice are smaller and half of them develop fatal hydrocephalus between 3 to 15 weeks of age (PubMed:15494444). They display subtle alterations in glucose homeostasis with an enhanced response to insulin which causes hypoglycemia (PubMed:15494444). Pancreatic islets become progressively larger (PubMed:15494444). Conditional deletion in neuronal progenitors leads to impaired cortical lamination due to increased levels of Dab1 (PubMed:24210661).</text>
</comment>
<evidence type="ECO:0000250" key="1">
    <source>
        <dbReference type="UniProtKB" id="O14512"/>
    </source>
</evidence>
<evidence type="ECO:0000255" key="2">
    <source>
        <dbReference type="PROSITE-ProRule" id="PRU00191"/>
    </source>
</evidence>
<evidence type="ECO:0000255" key="3">
    <source>
        <dbReference type="PROSITE-ProRule" id="PRU00194"/>
    </source>
</evidence>
<evidence type="ECO:0000256" key="4">
    <source>
        <dbReference type="SAM" id="MobiDB-lite"/>
    </source>
</evidence>
<evidence type="ECO:0000269" key="5">
    <source>
    </source>
</evidence>
<evidence type="ECO:0000269" key="6">
    <source>
    </source>
</evidence>
<evidence type="ECO:0000269" key="7">
    <source>
    </source>
</evidence>
<evidence type="ECO:0000269" key="8">
    <source>
    </source>
</evidence>
<evidence type="ECO:0000269" key="9">
    <source>
    </source>
</evidence>
<evidence type="ECO:0000303" key="10">
    <source>
    </source>
</evidence>
<evidence type="ECO:0000303" key="11">
    <source>
    </source>
</evidence>
<evidence type="ECO:0000305" key="12"/>
<evidence type="ECO:0000312" key="13">
    <source>
        <dbReference type="MGI" id="MGI:2651588"/>
    </source>
</evidence>
<dbReference type="EMBL" id="AF424814">
    <property type="protein sequence ID" value="AAL60516.1"/>
    <property type="molecule type" value="mRNA"/>
</dbReference>
<dbReference type="EMBL" id="AK147580">
    <property type="protein sequence ID" value="BAE28006.1"/>
    <property type="molecule type" value="mRNA"/>
</dbReference>
<dbReference type="EMBL" id="AK147650">
    <property type="protein sequence ID" value="BAE28049.1"/>
    <property type="molecule type" value="mRNA"/>
</dbReference>
<dbReference type="EMBL" id="AL596088">
    <property type="status" value="NOT_ANNOTATED_CDS"/>
    <property type="molecule type" value="Genomic_DNA"/>
</dbReference>
<dbReference type="RefSeq" id="NP_619598.1">
    <property type="nucleotide sequence ID" value="NM_138657.3"/>
</dbReference>
<dbReference type="SMR" id="Q8VHQ2"/>
<dbReference type="BioGRID" id="228649">
    <property type="interactions" value="6"/>
</dbReference>
<dbReference type="FunCoup" id="Q8VHQ2">
    <property type="interactions" value="856"/>
</dbReference>
<dbReference type="IntAct" id="Q8VHQ2">
    <property type="interactions" value="1"/>
</dbReference>
<dbReference type="MINT" id="Q8VHQ2"/>
<dbReference type="STRING" id="10090.ENSMUSP00000040896"/>
<dbReference type="GlyGen" id="Q8VHQ2">
    <property type="glycosylation" value="2 sites"/>
</dbReference>
<dbReference type="iPTMnet" id="Q8VHQ2"/>
<dbReference type="PhosphoSitePlus" id="Q8VHQ2"/>
<dbReference type="jPOST" id="Q8VHQ2"/>
<dbReference type="PaxDb" id="10090-ENSMUSP00000040896"/>
<dbReference type="PeptideAtlas" id="Q8VHQ2"/>
<dbReference type="ProteomicsDB" id="261317"/>
<dbReference type="Antibodypedia" id="72315">
    <property type="antibodies" value="211 antibodies from 30 providers"/>
</dbReference>
<dbReference type="DNASU" id="192157"/>
<dbReference type="Ensembl" id="ENSMUST00000045540.4">
    <property type="protein sequence ID" value="ENSMUSP00000040896.4"/>
    <property type="gene ID" value="ENSMUSG00000038485.7"/>
</dbReference>
<dbReference type="GeneID" id="192157"/>
<dbReference type="KEGG" id="mmu:192157"/>
<dbReference type="UCSC" id="uc007lea.1">
    <property type="organism name" value="mouse"/>
</dbReference>
<dbReference type="AGR" id="MGI:2651588"/>
<dbReference type="CTD" id="30837"/>
<dbReference type="MGI" id="MGI:2651588">
    <property type="gene designation" value="Socs7"/>
</dbReference>
<dbReference type="VEuPathDB" id="HostDB:ENSMUSG00000038485"/>
<dbReference type="eggNOG" id="KOG4566">
    <property type="taxonomic scope" value="Eukaryota"/>
</dbReference>
<dbReference type="GeneTree" id="ENSGT00940000156314"/>
<dbReference type="HOGENOM" id="CLU_022661_0_0_1"/>
<dbReference type="InParanoid" id="Q8VHQ2"/>
<dbReference type="OMA" id="SHTHIHH"/>
<dbReference type="PhylomeDB" id="Q8VHQ2"/>
<dbReference type="TreeFam" id="TF321368"/>
<dbReference type="UniPathway" id="UPA00143"/>
<dbReference type="BioGRID-ORCS" id="192157">
    <property type="hits" value="1 hit in 77 CRISPR screens"/>
</dbReference>
<dbReference type="ChiTaRS" id="Socs7">
    <property type="organism name" value="mouse"/>
</dbReference>
<dbReference type="PRO" id="PR:Q8VHQ2"/>
<dbReference type="Proteomes" id="UP000000589">
    <property type="component" value="Chromosome 11"/>
</dbReference>
<dbReference type="RNAct" id="Q8VHQ2">
    <property type="molecule type" value="protein"/>
</dbReference>
<dbReference type="Bgee" id="ENSMUSG00000038485">
    <property type="expression patterns" value="Expressed in seminiferous tubule of testis and 223 other cell types or tissues"/>
</dbReference>
<dbReference type="ExpressionAtlas" id="Q8VHQ2">
    <property type="expression patterns" value="baseline and differential"/>
</dbReference>
<dbReference type="GO" id="GO:0031466">
    <property type="term" value="C:Cul5-RING ubiquitin ligase complex"/>
    <property type="evidence" value="ECO:0000314"/>
    <property type="project" value="UniProtKB"/>
</dbReference>
<dbReference type="GO" id="GO:0005737">
    <property type="term" value="C:cytoplasm"/>
    <property type="evidence" value="ECO:0007669"/>
    <property type="project" value="UniProtKB-SubCell"/>
</dbReference>
<dbReference type="GO" id="GO:0005634">
    <property type="term" value="C:nucleus"/>
    <property type="evidence" value="ECO:0007669"/>
    <property type="project" value="UniProtKB-SubCell"/>
</dbReference>
<dbReference type="GO" id="GO:0005886">
    <property type="term" value="C:plasma membrane"/>
    <property type="evidence" value="ECO:0007669"/>
    <property type="project" value="UniProtKB-SubCell"/>
</dbReference>
<dbReference type="GO" id="GO:0140031">
    <property type="term" value="F:phosphorylation-dependent protein binding"/>
    <property type="evidence" value="ECO:0000314"/>
    <property type="project" value="UniProtKB"/>
</dbReference>
<dbReference type="GO" id="GO:1990756">
    <property type="term" value="F:ubiquitin-like ligase-substrate adaptor activity"/>
    <property type="evidence" value="ECO:0000314"/>
    <property type="project" value="UniProtKB"/>
</dbReference>
<dbReference type="GO" id="GO:0021799">
    <property type="term" value="P:cerebral cortex radially oriented cell migration"/>
    <property type="evidence" value="ECO:0000315"/>
    <property type="project" value="MGI"/>
</dbReference>
<dbReference type="GO" id="GO:0045444">
    <property type="term" value="P:fat cell differentiation"/>
    <property type="evidence" value="ECO:0000315"/>
    <property type="project" value="MGI"/>
</dbReference>
<dbReference type="GO" id="GO:0008286">
    <property type="term" value="P:insulin receptor signaling pathway"/>
    <property type="evidence" value="ECO:0000315"/>
    <property type="project" value="MGI"/>
</dbReference>
<dbReference type="GO" id="GO:0035556">
    <property type="term" value="P:intracellular signal transduction"/>
    <property type="evidence" value="ECO:0007669"/>
    <property type="project" value="InterPro"/>
</dbReference>
<dbReference type="GO" id="GO:0021819">
    <property type="term" value="P:layer formation in cerebral cortex"/>
    <property type="evidence" value="ECO:0000315"/>
    <property type="project" value="MGI"/>
</dbReference>
<dbReference type="GO" id="GO:0009968">
    <property type="term" value="P:negative regulation of signal transduction"/>
    <property type="evidence" value="ECO:0007669"/>
    <property type="project" value="UniProtKB-KW"/>
</dbReference>
<dbReference type="GO" id="GO:0043161">
    <property type="term" value="P:proteasome-mediated ubiquitin-dependent protein catabolic process"/>
    <property type="evidence" value="ECO:0000314"/>
    <property type="project" value="UniProtKB"/>
</dbReference>
<dbReference type="GO" id="GO:0016567">
    <property type="term" value="P:protein ubiquitination"/>
    <property type="evidence" value="ECO:0000314"/>
    <property type="project" value="MGI"/>
</dbReference>
<dbReference type="GO" id="GO:0021942">
    <property type="term" value="P:radial glia guided migration of Purkinje cell"/>
    <property type="evidence" value="ECO:0000315"/>
    <property type="project" value="MGI"/>
</dbReference>
<dbReference type="CDD" id="cd10388">
    <property type="entry name" value="SH2_SOCS7"/>
    <property type="match status" value="1"/>
</dbReference>
<dbReference type="CDD" id="cd03741">
    <property type="entry name" value="SOCS_SOCS7"/>
    <property type="match status" value="1"/>
</dbReference>
<dbReference type="FunFam" id="3.30.505.10:FF:000029">
    <property type="entry name" value="Suppressor of cytokine signaling 7"/>
    <property type="match status" value="1"/>
</dbReference>
<dbReference type="Gene3D" id="3.30.505.10">
    <property type="entry name" value="SH2 domain"/>
    <property type="match status" value="1"/>
</dbReference>
<dbReference type="InterPro" id="IPR000980">
    <property type="entry name" value="SH2"/>
</dbReference>
<dbReference type="InterPro" id="IPR036860">
    <property type="entry name" value="SH2_dom_sf"/>
</dbReference>
<dbReference type="InterPro" id="IPR035866">
    <property type="entry name" value="SOCS7_SH2"/>
</dbReference>
<dbReference type="InterPro" id="IPR037346">
    <property type="entry name" value="SOCS7_SOCS"/>
</dbReference>
<dbReference type="InterPro" id="IPR001496">
    <property type="entry name" value="SOCS_box"/>
</dbReference>
<dbReference type="InterPro" id="IPR036036">
    <property type="entry name" value="SOCS_box-like_dom_sf"/>
</dbReference>
<dbReference type="PANTHER" id="PTHR10155">
    <property type="entry name" value="PHOSPHATIDYLINOSITOL 3-KINASE REGULATORY SUBUNIT"/>
    <property type="match status" value="1"/>
</dbReference>
<dbReference type="PANTHER" id="PTHR10155:SF5">
    <property type="entry name" value="SUPPRESSOR OF CYTOKINE SIGNALING 7"/>
    <property type="match status" value="1"/>
</dbReference>
<dbReference type="Pfam" id="PF00017">
    <property type="entry name" value="SH2"/>
    <property type="match status" value="1"/>
</dbReference>
<dbReference type="Pfam" id="PF07525">
    <property type="entry name" value="SOCS_box"/>
    <property type="match status" value="1"/>
</dbReference>
<dbReference type="SMART" id="SM00252">
    <property type="entry name" value="SH2"/>
    <property type="match status" value="1"/>
</dbReference>
<dbReference type="SMART" id="SM00253">
    <property type="entry name" value="SOCS"/>
    <property type="match status" value="1"/>
</dbReference>
<dbReference type="SMART" id="SM00969">
    <property type="entry name" value="SOCS_box"/>
    <property type="match status" value="1"/>
</dbReference>
<dbReference type="SUPFAM" id="SSF55550">
    <property type="entry name" value="SH2 domain"/>
    <property type="match status" value="1"/>
</dbReference>
<dbReference type="SUPFAM" id="SSF158235">
    <property type="entry name" value="SOCS box-like"/>
    <property type="match status" value="1"/>
</dbReference>
<dbReference type="PROSITE" id="PS50001">
    <property type="entry name" value="SH2"/>
    <property type="match status" value="1"/>
</dbReference>
<dbReference type="PROSITE" id="PS50225">
    <property type="entry name" value="SOCS"/>
    <property type="match status" value="1"/>
</dbReference>
<organism>
    <name type="scientific">Mus musculus</name>
    <name type="common">Mouse</name>
    <dbReference type="NCBI Taxonomy" id="10090"/>
    <lineage>
        <taxon>Eukaryota</taxon>
        <taxon>Metazoa</taxon>
        <taxon>Chordata</taxon>
        <taxon>Craniata</taxon>
        <taxon>Vertebrata</taxon>
        <taxon>Euteleostomi</taxon>
        <taxon>Mammalia</taxon>
        <taxon>Eutheria</taxon>
        <taxon>Euarchontoglires</taxon>
        <taxon>Glires</taxon>
        <taxon>Rodentia</taxon>
        <taxon>Myomorpha</taxon>
        <taxon>Muroidea</taxon>
        <taxon>Muridae</taxon>
        <taxon>Murinae</taxon>
        <taxon>Mus</taxon>
        <taxon>Mus</taxon>
    </lineage>
</organism>